<evidence type="ECO:0000255" key="1"/>
<evidence type="ECO:0000305" key="2"/>
<gene>
    <name type="ORF">CG33169</name>
</gene>
<organism>
    <name type="scientific">Drosophila melanogaster</name>
    <name type="common">Fruit fly</name>
    <dbReference type="NCBI Taxonomy" id="7227"/>
    <lineage>
        <taxon>Eukaryota</taxon>
        <taxon>Metazoa</taxon>
        <taxon>Ecdysozoa</taxon>
        <taxon>Arthropoda</taxon>
        <taxon>Hexapoda</taxon>
        <taxon>Insecta</taxon>
        <taxon>Pterygota</taxon>
        <taxon>Neoptera</taxon>
        <taxon>Endopterygota</taxon>
        <taxon>Diptera</taxon>
        <taxon>Brachycera</taxon>
        <taxon>Muscomorpha</taxon>
        <taxon>Ephydroidea</taxon>
        <taxon>Drosophilidae</taxon>
        <taxon>Drosophila</taxon>
        <taxon>Sophophora</taxon>
    </lineage>
</organism>
<comment type="subcellular location">
    <subcellularLocation>
        <location evidence="2">Membrane</location>
        <topology evidence="2">Single-pass membrane protein</topology>
    </subcellularLocation>
</comment>
<comment type="similarity">
    <text evidence="2">Belongs to the SMCO4 family.</text>
</comment>
<sequence>MRQLKGKVKETRKQKKERKLDNLETQAKIRTVVLPALGVLAVFLVLFVYLKTRPAVLA</sequence>
<reference key="1">
    <citation type="journal article" date="2000" name="Science">
        <title>The genome sequence of Drosophila melanogaster.</title>
        <authorList>
            <person name="Adams M.D."/>
            <person name="Celniker S.E."/>
            <person name="Holt R.A."/>
            <person name="Evans C.A."/>
            <person name="Gocayne J.D."/>
            <person name="Amanatides P.G."/>
            <person name="Scherer S.E."/>
            <person name="Li P.W."/>
            <person name="Hoskins R.A."/>
            <person name="Galle R.F."/>
            <person name="George R.A."/>
            <person name="Lewis S.E."/>
            <person name="Richards S."/>
            <person name="Ashburner M."/>
            <person name="Henderson S.N."/>
            <person name="Sutton G.G."/>
            <person name="Wortman J.R."/>
            <person name="Yandell M.D."/>
            <person name="Zhang Q."/>
            <person name="Chen L.X."/>
            <person name="Brandon R.C."/>
            <person name="Rogers Y.-H.C."/>
            <person name="Blazej R.G."/>
            <person name="Champe M."/>
            <person name="Pfeiffer B.D."/>
            <person name="Wan K.H."/>
            <person name="Doyle C."/>
            <person name="Baxter E.G."/>
            <person name="Helt G."/>
            <person name="Nelson C.R."/>
            <person name="Miklos G.L.G."/>
            <person name="Abril J.F."/>
            <person name="Agbayani A."/>
            <person name="An H.-J."/>
            <person name="Andrews-Pfannkoch C."/>
            <person name="Baldwin D."/>
            <person name="Ballew R.M."/>
            <person name="Basu A."/>
            <person name="Baxendale J."/>
            <person name="Bayraktaroglu L."/>
            <person name="Beasley E.M."/>
            <person name="Beeson K.Y."/>
            <person name="Benos P.V."/>
            <person name="Berman B.P."/>
            <person name="Bhandari D."/>
            <person name="Bolshakov S."/>
            <person name="Borkova D."/>
            <person name="Botchan M.R."/>
            <person name="Bouck J."/>
            <person name="Brokstein P."/>
            <person name="Brottier P."/>
            <person name="Burtis K.C."/>
            <person name="Busam D.A."/>
            <person name="Butler H."/>
            <person name="Cadieu E."/>
            <person name="Center A."/>
            <person name="Chandra I."/>
            <person name="Cherry J.M."/>
            <person name="Cawley S."/>
            <person name="Dahlke C."/>
            <person name="Davenport L.B."/>
            <person name="Davies P."/>
            <person name="de Pablos B."/>
            <person name="Delcher A."/>
            <person name="Deng Z."/>
            <person name="Mays A.D."/>
            <person name="Dew I."/>
            <person name="Dietz S.M."/>
            <person name="Dodson K."/>
            <person name="Doup L.E."/>
            <person name="Downes M."/>
            <person name="Dugan-Rocha S."/>
            <person name="Dunkov B.C."/>
            <person name="Dunn P."/>
            <person name="Durbin K.J."/>
            <person name="Evangelista C.C."/>
            <person name="Ferraz C."/>
            <person name="Ferriera S."/>
            <person name="Fleischmann W."/>
            <person name="Fosler C."/>
            <person name="Gabrielian A.E."/>
            <person name="Garg N.S."/>
            <person name="Gelbart W.M."/>
            <person name="Glasser K."/>
            <person name="Glodek A."/>
            <person name="Gong F."/>
            <person name="Gorrell J.H."/>
            <person name="Gu Z."/>
            <person name="Guan P."/>
            <person name="Harris M."/>
            <person name="Harris N.L."/>
            <person name="Harvey D.A."/>
            <person name="Heiman T.J."/>
            <person name="Hernandez J.R."/>
            <person name="Houck J."/>
            <person name="Hostin D."/>
            <person name="Houston K.A."/>
            <person name="Howland T.J."/>
            <person name="Wei M.-H."/>
            <person name="Ibegwam C."/>
            <person name="Jalali M."/>
            <person name="Kalush F."/>
            <person name="Karpen G.H."/>
            <person name="Ke Z."/>
            <person name="Kennison J.A."/>
            <person name="Ketchum K.A."/>
            <person name="Kimmel B.E."/>
            <person name="Kodira C.D."/>
            <person name="Kraft C.L."/>
            <person name="Kravitz S."/>
            <person name="Kulp D."/>
            <person name="Lai Z."/>
            <person name="Lasko P."/>
            <person name="Lei Y."/>
            <person name="Levitsky A.A."/>
            <person name="Li J.H."/>
            <person name="Li Z."/>
            <person name="Liang Y."/>
            <person name="Lin X."/>
            <person name="Liu X."/>
            <person name="Mattei B."/>
            <person name="McIntosh T.C."/>
            <person name="McLeod M.P."/>
            <person name="McPherson D."/>
            <person name="Merkulov G."/>
            <person name="Milshina N.V."/>
            <person name="Mobarry C."/>
            <person name="Morris J."/>
            <person name="Moshrefi A."/>
            <person name="Mount S.M."/>
            <person name="Moy M."/>
            <person name="Murphy B."/>
            <person name="Murphy L."/>
            <person name="Muzny D.M."/>
            <person name="Nelson D.L."/>
            <person name="Nelson D.R."/>
            <person name="Nelson K.A."/>
            <person name="Nixon K."/>
            <person name="Nusskern D.R."/>
            <person name="Pacleb J.M."/>
            <person name="Palazzolo M."/>
            <person name="Pittman G.S."/>
            <person name="Pan S."/>
            <person name="Pollard J."/>
            <person name="Puri V."/>
            <person name="Reese M.G."/>
            <person name="Reinert K."/>
            <person name="Remington K."/>
            <person name="Saunders R.D.C."/>
            <person name="Scheeler F."/>
            <person name="Shen H."/>
            <person name="Shue B.C."/>
            <person name="Siden-Kiamos I."/>
            <person name="Simpson M."/>
            <person name="Skupski M.P."/>
            <person name="Smith T.J."/>
            <person name="Spier E."/>
            <person name="Spradling A.C."/>
            <person name="Stapleton M."/>
            <person name="Strong R."/>
            <person name="Sun E."/>
            <person name="Svirskas R."/>
            <person name="Tector C."/>
            <person name="Turner R."/>
            <person name="Venter E."/>
            <person name="Wang A.H."/>
            <person name="Wang X."/>
            <person name="Wang Z.-Y."/>
            <person name="Wassarman D.A."/>
            <person name="Weinstock G.M."/>
            <person name="Weissenbach J."/>
            <person name="Williams S.M."/>
            <person name="Woodage T."/>
            <person name="Worley K.C."/>
            <person name="Wu D."/>
            <person name="Yang S."/>
            <person name="Yao Q.A."/>
            <person name="Ye J."/>
            <person name="Yeh R.-F."/>
            <person name="Zaveri J.S."/>
            <person name="Zhan M."/>
            <person name="Zhang G."/>
            <person name="Zhao Q."/>
            <person name="Zheng L."/>
            <person name="Zheng X.H."/>
            <person name="Zhong F.N."/>
            <person name="Zhong W."/>
            <person name="Zhou X."/>
            <person name="Zhu S.C."/>
            <person name="Zhu X."/>
            <person name="Smith H.O."/>
            <person name="Gibbs R.A."/>
            <person name="Myers E.W."/>
            <person name="Rubin G.M."/>
            <person name="Venter J.C."/>
        </authorList>
    </citation>
    <scope>NUCLEOTIDE SEQUENCE [LARGE SCALE GENOMIC DNA]</scope>
    <source>
        <strain>Berkeley</strain>
    </source>
</reference>
<reference key="2">
    <citation type="journal article" date="2002" name="Genome Biol.">
        <title>Annotation of the Drosophila melanogaster euchromatic genome: a systematic review.</title>
        <authorList>
            <person name="Misra S."/>
            <person name="Crosby M.A."/>
            <person name="Mungall C.J."/>
            <person name="Matthews B.B."/>
            <person name="Campbell K.S."/>
            <person name="Hradecky P."/>
            <person name="Huang Y."/>
            <person name="Kaminker J.S."/>
            <person name="Millburn G.H."/>
            <person name="Prochnik S.E."/>
            <person name="Smith C.D."/>
            <person name="Tupy J.L."/>
            <person name="Whitfield E.J."/>
            <person name="Bayraktaroglu L."/>
            <person name="Berman B.P."/>
            <person name="Bettencourt B.R."/>
            <person name="Celniker S.E."/>
            <person name="de Grey A.D.N.J."/>
            <person name="Drysdale R.A."/>
            <person name="Harris N.L."/>
            <person name="Richter J."/>
            <person name="Russo S."/>
            <person name="Schroeder A.J."/>
            <person name="Shu S.Q."/>
            <person name="Stapleton M."/>
            <person name="Yamada C."/>
            <person name="Ashburner M."/>
            <person name="Gelbart W.M."/>
            <person name="Rubin G.M."/>
            <person name="Lewis S.E."/>
        </authorList>
    </citation>
    <scope>GENOME REANNOTATION</scope>
    <source>
        <strain>Berkeley</strain>
    </source>
</reference>
<reference key="3">
    <citation type="journal article" date="2002" name="Genome Biol.">
        <title>A Drosophila full-length cDNA resource.</title>
        <authorList>
            <person name="Stapleton M."/>
            <person name="Carlson J.W."/>
            <person name="Brokstein P."/>
            <person name="Yu C."/>
            <person name="Champe M."/>
            <person name="George R.A."/>
            <person name="Guarin H."/>
            <person name="Kronmiller B."/>
            <person name="Pacleb J.M."/>
            <person name="Park S."/>
            <person name="Wan K.H."/>
            <person name="Rubin G.M."/>
            <person name="Celniker S.E."/>
        </authorList>
    </citation>
    <scope>NUCLEOTIDE SEQUENCE [LARGE SCALE MRNA]</scope>
    <source>
        <strain>Berkeley</strain>
        <tissue>Head</tissue>
    </source>
</reference>
<feature type="chain" id="PRO_0000293702" description="Single-pass membrane and coiled-coil domain-containing protein 4 homolog">
    <location>
        <begin position="1"/>
        <end position="58"/>
    </location>
</feature>
<feature type="transmembrane region" description="Helical" evidence="1">
    <location>
        <begin position="31"/>
        <end position="51"/>
    </location>
</feature>
<feature type="coiled-coil region" evidence="1">
    <location>
        <begin position="1"/>
        <end position="31"/>
    </location>
</feature>
<name>SMCO4_DROME</name>
<protein>
    <recommendedName>
        <fullName>Single-pass membrane and coiled-coil domain-containing protein 4 homolog</fullName>
    </recommendedName>
</protein>
<keyword id="KW-0175">Coiled coil</keyword>
<keyword id="KW-0472">Membrane</keyword>
<keyword id="KW-1185">Reference proteome</keyword>
<keyword id="KW-0812">Transmembrane</keyword>
<keyword id="KW-1133">Transmembrane helix</keyword>
<dbReference type="EMBL" id="AE014296">
    <property type="protein sequence ID" value="AAN12206.1"/>
    <property type="molecule type" value="Genomic_DNA"/>
</dbReference>
<dbReference type="EMBL" id="AE014296">
    <property type="protein sequence ID" value="ACL83354.1"/>
    <property type="molecule type" value="Genomic_DNA"/>
</dbReference>
<dbReference type="EMBL" id="AY071747">
    <property type="protein sequence ID" value="AAL49369.1"/>
    <property type="molecule type" value="mRNA"/>
</dbReference>
<dbReference type="RefSeq" id="NP_001137999.1">
    <property type="nucleotide sequence ID" value="NM_001144527.1"/>
</dbReference>
<dbReference type="RefSeq" id="NP_788568.1">
    <property type="nucleotide sequence ID" value="NM_176390.1"/>
</dbReference>
<dbReference type="SMR" id="Q8SY72"/>
<dbReference type="BioGRID" id="65732">
    <property type="interactions" value="24"/>
</dbReference>
<dbReference type="FunCoup" id="Q8SY72">
    <property type="interactions" value="1"/>
</dbReference>
<dbReference type="IntAct" id="Q8SY72">
    <property type="interactions" value="23"/>
</dbReference>
<dbReference type="PaxDb" id="7227-FBpp0078200"/>
<dbReference type="DNASU" id="40504"/>
<dbReference type="EnsemblMetazoa" id="FBtr0078549">
    <property type="protein sequence ID" value="FBpp0078200"/>
    <property type="gene ID" value="FBgn0053169"/>
</dbReference>
<dbReference type="EnsemblMetazoa" id="FBtr0299876">
    <property type="protein sequence ID" value="FBpp0289154"/>
    <property type="gene ID" value="FBgn0053169"/>
</dbReference>
<dbReference type="GeneID" id="40504"/>
<dbReference type="KEGG" id="dme:Dmel_CG33169"/>
<dbReference type="UCSC" id="CG33169-RA">
    <property type="organism name" value="d. melanogaster"/>
</dbReference>
<dbReference type="AGR" id="FB:FBgn0053169"/>
<dbReference type="FlyBase" id="FBgn0053169">
    <property type="gene designation" value="CG33169"/>
</dbReference>
<dbReference type="VEuPathDB" id="VectorBase:FBgn0053169"/>
<dbReference type="eggNOG" id="ENOG502S7F4">
    <property type="taxonomic scope" value="Eukaryota"/>
</dbReference>
<dbReference type="HOGENOM" id="CLU_209950_1_0_1"/>
<dbReference type="InParanoid" id="Q8SY72"/>
<dbReference type="OMA" id="FFIYANT"/>
<dbReference type="OrthoDB" id="10266771at2759"/>
<dbReference type="PhylomeDB" id="Q8SY72"/>
<dbReference type="BioGRID-ORCS" id="40504">
    <property type="hits" value="0 hits in 1 CRISPR screen"/>
</dbReference>
<dbReference type="GenomeRNAi" id="40504"/>
<dbReference type="PRO" id="PR:Q8SY72"/>
<dbReference type="Proteomes" id="UP000000803">
    <property type="component" value="Chromosome 3L"/>
</dbReference>
<dbReference type="Bgee" id="FBgn0053169">
    <property type="expression patterns" value="Expressed in spermatid in male reproductive gland and 93 other cell types or tissues"/>
</dbReference>
<dbReference type="ExpressionAtlas" id="Q8SY72">
    <property type="expression patterns" value="baseline and differential"/>
</dbReference>
<dbReference type="GO" id="GO:0016020">
    <property type="term" value="C:membrane"/>
    <property type="evidence" value="ECO:0007669"/>
    <property type="project" value="UniProtKB-SubCell"/>
</dbReference>
<dbReference type="InterPro" id="IPR027960">
    <property type="entry name" value="DUF4519"/>
</dbReference>
<dbReference type="PANTHER" id="PTHR34644">
    <property type="entry name" value="SINGLE-PASS MEMBRANE AND COILED-COIL DOMAIN-CONTAINING PROTEIN 4"/>
    <property type="match status" value="1"/>
</dbReference>
<dbReference type="PANTHER" id="PTHR34644:SF2">
    <property type="entry name" value="SINGLE-PASS MEMBRANE AND COILED-COIL DOMAIN-CONTAINING PROTEIN 4"/>
    <property type="match status" value="1"/>
</dbReference>
<dbReference type="Pfam" id="PF15012">
    <property type="entry name" value="DUF4519"/>
    <property type="match status" value="1"/>
</dbReference>
<proteinExistence type="inferred from homology"/>
<accession>Q8SY72</accession>
<accession>B7Z0A1</accession>
<accession>Q86BG4</accession>